<reference key="1">
    <citation type="journal article" date="2004" name="Proc. Natl. Acad. Sci. U.S.A.">
        <title>The diploid genome sequence of Candida albicans.</title>
        <authorList>
            <person name="Jones T."/>
            <person name="Federspiel N.A."/>
            <person name="Chibana H."/>
            <person name="Dungan J."/>
            <person name="Kalman S."/>
            <person name="Magee B.B."/>
            <person name="Newport G."/>
            <person name="Thorstenson Y.R."/>
            <person name="Agabian N."/>
            <person name="Magee P.T."/>
            <person name="Davis R.W."/>
            <person name="Scherer S."/>
        </authorList>
    </citation>
    <scope>NUCLEOTIDE SEQUENCE [LARGE SCALE GENOMIC DNA]</scope>
    <source>
        <strain>SC5314 / ATCC MYA-2876</strain>
    </source>
</reference>
<reference key="2">
    <citation type="journal article" date="2007" name="Genome Biol.">
        <title>Assembly of the Candida albicans genome into sixteen supercontigs aligned on the eight chromosomes.</title>
        <authorList>
            <person name="van het Hoog M."/>
            <person name="Rast T.J."/>
            <person name="Martchenko M."/>
            <person name="Grindle S."/>
            <person name="Dignard D."/>
            <person name="Hogues H."/>
            <person name="Cuomo C."/>
            <person name="Berriman M."/>
            <person name="Scherer S."/>
            <person name="Magee B.B."/>
            <person name="Whiteway M."/>
            <person name="Chibana H."/>
            <person name="Nantel A."/>
            <person name="Magee P.T."/>
        </authorList>
    </citation>
    <scope>GENOME REANNOTATION</scope>
    <source>
        <strain>SC5314 / ATCC MYA-2876</strain>
    </source>
</reference>
<reference key="3">
    <citation type="journal article" date="2013" name="Genome Biol.">
        <title>Assembly of a phased diploid Candida albicans genome facilitates allele-specific measurements and provides a simple model for repeat and indel structure.</title>
        <authorList>
            <person name="Muzzey D."/>
            <person name="Schwartz K."/>
            <person name="Weissman J.S."/>
            <person name="Sherlock G."/>
        </authorList>
    </citation>
    <scope>NUCLEOTIDE SEQUENCE [LARGE SCALE GENOMIC DNA]</scope>
    <scope>GENOME REANNOTATION</scope>
    <source>
        <strain>SC5314 / ATCC MYA-2876</strain>
    </source>
</reference>
<evidence type="ECO:0000255" key="1">
    <source>
        <dbReference type="HAMAP-Rule" id="MF_03009"/>
    </source>
</evidence>
<evidence type="ECO:0000256" key="2">
    <source>
        <dbReference type="SAM" id="MobiDB-lite"/>
    </source>
</evidence>
<feature type="chain" id="PRO_0000365151" description="Eukaryotic translation initiation factor 3 subunit J">
    <location>
        <begin position="1"/>
        <end position="285"/>
    </location>
</feature>
<feature type="region of interest" description="Disordered" evidence="2">
    <location>
        <begin position="1"/>
        <end position="86"/>
    </location>
</feature>
<feature type="region of interest" description="Disordered" evidence="2">
    <location>
        <begin position="232"/>
        <end position="285"/>
    </location>
</feature>
<feature type="coiled-coil region" evidence="1">
    <location>
        <begin position="36"/>
        <end position="81"/>
    </location>
</feature>
<feature type="compositionally biased region" description="Acidic residues" evidence="2">
    <location>
        <begin position="22"/>
        <end position="41"/>
    </location>
</feature>
<feature type="compositionally biased region" description="Basic and acidic residues" evidence="2">
    <location>
        <begin position="42"/>
        <end position="86"/>
    </location>
</feature>
<feature type="compositionally biased region" description="Acidic residues" evidence="2">
    <location>
        <begin position="269"/>
        <end position="285"/>
    </location>
</feature>
<name>EIF3J_CANAL</name>
<gene>
    <name evidence="1" type="primary">HCR1</name>
    <name type="ordered locus">CAALFM_CR10370WA</name>
    <name type="ORF">CaO19.7613</name>
</gene>
<keyword id="KW-0175">Coiled coil</keyword>
<keyword id="KW-0963">Cytoplasm</keyword>
<keyword id="KW-0396">Initiation factor</keyword>
<keyword id="KW-0648">Protein biosynthesis</keyword>
<keyword id="KW-1185">Reference proteome</keyword>
<comment type="function">
    <text evidence="1">Component of the eukaryotic translation initiation factor 3 (eIF-3) complex, which is involved in protein synthesis of a specialized repertoire of mRNAs and, together with other initiation factors, stimulates binding of mRNA and methionyl-tRNAi to the 40S ribosome. The eIF-3 complex specifically targets and initiates translation of a subset of mRNAs involved in cell proliferation.</text>
</comment>
<comment type="subunit">
    <text evidence="1">Component of the eukaryotic translation initiation factor 3 (eIF-3) complex.</text>
</comment>
<comment type="subcellular location">
    <subcellularLocation>
        <location evidence="1">Cytoplasm</location>
    </subcellularLocation>
</comment>
<comment type="similarity">
    <text evidence="1">Belongs to the eIF-3 subunit J family.</text>
</comment>
<protein>
    <recommendedName>
        <fullName evidence="1">Eukaryotic translation initiation factor 3 subunit J</fullName>
        <shortName evidence="1">eIF3j</shortName>
    </recommendedName>
    <alternativeName>
        <fullName>Eukaryotic translation initiation factor 3 30 kDa subunit</fullName>
        <shortName>eIF-3 30 kDa</shortName>
    </alternativeName>
</protein>
<sequence>MSWDDEDFDIPSNSKKTVAASWEDEEDDGPVLESWDVDPEEEEKKKKEAKLQEAKRKAELKAKEDAEKAKKDAKRKELEQFDQLDERTRKELLKKAELNADLNNAADLFGGLGVADDNDDDDFDINEHPRERITKQQLAAAAASKRPALTKDTPLEEHPLFQPTNKQEYEKLRKTVGTSLTRLNEDSSLLYASSLAVDLIRDLSQPLSVENLRKVISTLNVVIKDKERQERQARLKKAGGTATGGAGKKKAKPLARPNVGGGFKKDAFDDMDDGQFDDLDDDDFM</sequence>
<accession>Q5ACM9</accession>
<accession>A0A1D8PU85</accession>
<dbReference type="EMBL" id="CP017630">
    <property type="protein sequence ID" value="AOW31687.1"/>
    <property type="molecule type" value="Genomic_DNA"/>
</dbReference>
<dbReference type="RefSeq" id="XP_719374.1">
    <property type="nucleotide sequence ID" value="XM_714281.1"/>
</dbReference>
<dbReference type="SMR" id="Q5ACM9"/>
<dbReference type="BioGRID" id="1222046">
    <property type="interactions" value="1"/>
</dbReference>
<dbReference type="FunCoup" id="Q5ACM9">
    <property type="interactions" value="117"/>
</dbReference>
<dbReference type="STRING" id="237561.Q5ACM9"/>
<dbReference type="EnsemblFungi" id="CR_10370W_A-T">
    <property type="protein sequence ID" value="CR_10370W_A-T-p1"/>
    <property type="gene ID" value="CR_10370W_A"/>
</dbReference>
<dbReference type="GeneID" id="3638952"/>
<dbReference type="KEGG" id="cal:CAALFM_CR10370WA"/>
<dbReference type="CGD" id="CAL0000183414">
    <property type="gene designation" value="HCR1"/>
</dbReference>
<dbReference type="VEuPathDB" id="FungiDB:CR_10370W_A"/>
<dbReference type="eggNOG" id="KOG4813">
    <property type="taxonomic scope" value="Eukaryota"/>
</dbReference>
<dbReference type="HOGENOM" id="CLU_085412_0_0_1"/>
<dbReference type="InParanoid" id="Q5ACM9"/>
<dbReference type="OMA" id="KPHYALW"/>
<dbReference type="OrthoDB" id="20381at2759"/>
<dbReference type="Proteomes" id="UP000000559">
    <property type="component" value="Chromosome R"/>
</dbReference>
<dbReference type="GO" id="GO:0016282">
    <property type="term" value="C:eukaryotic 43S preinitiation complex"/>
    <property type="evidence" value="ECO:0007669"/>
    <property type="project" value="UniProtKB-UniRule"/>
</dbReference>
<dbReference type="GO" id="GO:0033290">
    <property type="term" value="C:eukaryotic 48S preinitiation complex"/>
    <property type="evidence" value="ECO:0007669"/>
    <property type="project" value="UniProtKB-UniRule"/>
</dbReference>
<dbReference type="GO" id="GO:0005852">
    <property type="term" value="C:eukaryotic translation initiation factor 3 complex"/>
    <property type="evidence" value="ECO:0000318"/>
    <property type="project" value="GO_Central"/>
</dbReference>
<dbReference type="GO" id="GO:0003743">
    <property type="term" value="F:translation initiation factor activity"/>
    <property type="evidence" value="ECO:0000303"/>
    <property type="project" value="CGD"/>
</dbReference>
<dbReference type="GO" id="GO:0001732">
    <property type="term" value="P:formation of cytoplasmic translation initiation complex"/>
    <property type="evidence" value="ECO:0007669"/>
    <property type="project" value="UniProtKB-UniRule"/>
</dbReference>
<dbReference type="GO" id="GO:0000462">
    <property type="term" value="P:maturation of SSU-rRNA from tricistronic rRNA transcript (SSU-rRNA, 5.8S rRNA, LSU-rRNA)"/>
    <property type="evidence" value="ECO:0007669"/>
    <property type="project" value="EnsemblFungi"/>
</dbReference>
<dbReference type="GO" id="GO:0000184">
    <property type="term" value="P:nuclear-transcribed mRNA catabolic process, nonsense-mediated decay"/>
    <property type="evidence" value="ECO:0007669"/>
    <property type="project" value="EnsemblFungi"/>
</dbReference>
<dbReference type="GO" id="GO:0006413">
    <property type="term" value="P:translational initiation"/>
    <property type="evidence" value="ECO:0000303"/>
    <property type="project" value="CGD"/>
</dbReference>
<dbReference type="Gene3D" id="1.10.246.60">
    <property type="entry name" value="Eukaryotic translation initiation factor 3 like domains"/>
    <property type="match status" value="1"/>
</dbReference>
<dbReference type="HAMAP" id="MF_03009">
    <property type="entry name" value="eIF3j"/>
    <property type="match status" value="1"/>
</dbReference>
<dbReference type="InterPro" id="IPR023194">
    <property type="entry name" value="eIF3-like_dom_sf"/>
</dbReference>
<dbReference type="InterPro" id="IPR013906">
    <property type="entry name" value="eIF3j"/>
</dbReference>
<dbReference type="PANTHER" id="PTHR21681">
    <property type="entry name" value="EUKARYOTIC TRANSLATION INITIATION FACTOR 3 SUBUNIT J"/>
    <property type="match status" value="1"/>
</dbReference>
<dbReference type="PANTHER" id="PTHR21681:SF0">
    <property type="entry name" value="EUKARYOTIC TRANSLATION INITIATION FACTOR 3 SUBUNIT J"/>
    <property type="match status" value="1"/>
</dbReference>
<dbReference type="Pfam" id="PF08597">
    <property type="entry name" value="eIF3_subunit"/>
    <property type="match status" value="1"/>
</dbReference>
<proteinExistence type="inferred from homology"/>
<organism>
    <name type="scientific">Candida albicans (strain SC5314 / ATCC MYA-2876)</name>
    <name type="common">Yeast</name>
    <dbReference type="NCBI Taxonomy" id="237561"/>
    <lineage>
        <taxon>Eukaryota</taxon>
        <taxon>Fungi</taxon>
        <taxon>Dikarya</taxon>
        <taxon>Ascomycota</taxon>
        <taxon>Saccharomycotina</taxon>
        <taxon>Pichiomycetes</taxon>
        <taxon>Debaryomycetaceae</taxon>
        <taxon>Candida/Lodderomyces clade</taxon>
        <taxon>Candida</taxon>
    </lineage>
</organism>